<accession>Q47FB6</accession>
<keyword id="KW-0963">Cytoplasm</keyword>
<keyword id="KW-0378">Hydrolase</keyword>
<keyword id="KW-0645">Protease</keyword>
<keyword id="KW-0720">Serine protease</keyword>
<dbReference type="EC" id="3.4.21.92" evidence="1"/>
<dbReference type="EMBL" id="CP000089">
    <property type="protein sequence ID" value="AAZ46465.1"/>
    <property type="molecule type" value="Genomic_DNA"/>
</dbReference>
<dbReference type="SMR" id="Q47FB6"/>
<dbReference type="STRING" id="159087.Daro_1718"/>
<dbReference type="MEROPS" id="S14.001"/>
<dbReference type="KEGG" id="dar:Daro_1718"/>
<dbReference type="eggNOG" id="COG0740">
    <property type="taxonomic scope" value="Bacteria"/>
</dbReference>
<dbReference type="HOGENOM" id="CLU_058707_3_2_4"/>
<dbReference type="OrthoDB" id="9802800at2"/>
<dbReference type="GO" id="GO:0005737">
    <property type="term" value="C:cytoplasm"/>
    <property type="evidence" value="ECO:0007669"/>
    <property type="project" value="UniProtKB-SubCell"/>
</dbReference>
<dbReference type="GO" id="GO:0009368">
    <property type="term" value="C:endopeptidase Clp complex"/>
    <property type="evidence" value="ECO:0007669"/>
    <property type="project" value="TreeGrafter"/>
</dbReference>
<dbReference type="GO" id="GO:0004176">
    <property type="term" value="F:ATP-dependent peptidase activity"/>
    <property type="evidence" value="ECO:0007669"/>
    <property type="project" value="InterPro"/>
</dbReference>
<dbReference type="GO" id="GO:0051117">
    <property type="term" value="F:ATPase binding"/>
    <property type="evidence" value="ECO:0007669"/>
    <property type="project" value="TreeGrafter"/>
</dbReference>
<dbReference type="GO" id="GO:0004252">
    <property type="term" value="F:serine-type endopeptidase activity"/>
    <property type="evidence" value="ECO:0007669"/>
    <property type="project" value="UniProtKB-UniRule"/>
</dbReference>
<dbReference type="GO" id="GO:0006515">
    <property type="term" value="P:protein quality control for misfolded or incompletely synthesized proteins"/>
    <property type="evidence" value="ECO:0007669"/>
    <property type="project" value="TreeGrafter"/>
</dbReference>
<dbReference type="CDD" id="cd07017">
    <property type="entry name" value="S14_ClpP_2"/>
    <property type="match status" value="1"/>
</dbReference>
<dbReference type="FunFam" id="3.90.226.10:FF:000001">
    <property type="entry name" value="ATP-dependent Clp protease proteolytic subunit"/>
    <property type="match status" value="1"/>
</dbReference>
<dbReference type="Gene3D" id="3.90.226.10">
    <property type="entry name" value="2-enoyl-CoA Hydratase, Chain A, domain 1"/>
    <property type="match status" value="1"/>
</dbReference>
<dbReference type="HAMAP" id="MF_00444">
    <property type="entry name" value="ClpP"/>
    <property type="match status" value="1"/>
</dbReference>
<dbReference type="InterPro" id="IPR001907">
    <property type="entry name" value="ClpP"/>
</dbReference>
<dbReference type="InterPro" id="IPR029045">
    <property type="entry name" value="ClpP/crotonase-like_dom_sf"/>
</dbReference>
<dbReference type="InterPro" id="IPR023562">
    <property type="entry name" value="ClpP/TepA"/>
</dbReference>
<dbReference type="InterPro" id="IPR033135">
    <property type="entry name" value="ClpP_His_AS"/>
</dbReference>
<dbReference type="InterPro" id="IPR018215">
    <property type="entry name" value="ClpP_Ser_AS"/>
</dbReference>
<dbReference type="NCBIfam" id="TIGR00493">
    <property type="entry name" value="clpP"/>
    <property type="match status" value="1"/>
</dbReference>
<dbReference type="NCBIfam" id="NF001368">
    <property type="entry name" value="PRK00277.1"/>
    <property type="match status" value="1"/>
</dbReference>
<dbReference type="NCBIfam" id="NF009205">
    <property type="entry name" value="PRK12553.1"/>
    <property type="match status" value="1"/>
</dbReference>
<dbReference type="PANTHER" id="PTHR10381">
    <property type="entry name" value="ATP-DEPENDENT CLP PROTEASE PROTEOLYTIC SUBUNIT"/>
    <property type="match status" value="1"/>
</dbReference>
<dbReference type="PANTHER" id="PTHR10381:SF70">
    <property type="entry name" value="ATP-DEPENDENT CLP PROTEASE PROTEOLYTIC SUBUNIT"/>
    <property type="match status" value="1"/>
</dbReference>
<dbReference type="Pfam" id="PF00574">
    <property type="entry name" value="CLP_protease"/>
    <property type="match status" value="1"/>
</dbReference>
<dbReference type="PRINTS" id="PR00127">
    <property type="entry name" value="CLPPROTEASEP"/>
</dbReference>
<dbReference type="SUPFAM" id="SSF52096">
    <property type="entry name" value="ClpP/crotonase"/>
    <property type="match status" value="1"/>
</dbReference>
<dbReference type="PROSITE" id="PS00382">
    <property type="entry name" value="CLP_PROTEASE_HIS"/>
    <property type="match status" value="1"/>
</dbReference>
<dbReference type="PROSITE" id="PS00381">
    <property type="entry name" value="CLP_PROTEASE_SER"/>
    <property type="match status" value="1"/>
</dbReference>
<sequence>MNIDNASNWDPQALGLVPMVVEQSGRGERAYDIYSRLLKERVIFLVGPVNDVTANLVVAQLLFLEAENPDKDIYFYINSPGGSVTAGMSIYDTMQFIKPDVSTLCIGQAASMGAFLLNAGAKGKRFALPNSRVMIHQPLGGFQGQASDIAIHAKEILSIRDRLNRIMAEHSGQPLERIEKDTDRDNFLSAAEAAEYGLIDKVLTRRDAA</sequence>
<proteinExistence type="inferred from homology"/>
<organism>
    <name type="scientific">Dechloromonas aromatica (strain RCB)</name>
    <dbReference type="NCBI Taxonomy" id="159087"/>
    <lineage>
        <taxon>Bacteria</taxon>
        <taxon>Pseudomonadati</taxon>
        <taxon>Pseudomonadota</taxon>
        <taxon>Betaproteobacteria</taxon>
        <taxon>Rhodocyclales</taxon>
        <taxon>Azonexaceae</taxon>
        <taxon>Dechloromonas</taxon>
    </lineage>
</organism>
<gene>
    <name evidence="1" type="primary">clpP</name>
    <name type="ordered locus">Daro_1718</name>
</gene>
<protein>
    <recommendedName>
        <fullName evidence="1">ATP-dependent Clp protease proteolytic subunit</fullName>
        <ecNumber evidence="1">3.4.21.92</ecNumber>
    </recommendedName>
    <alternativeName>
        <fullName evidence="1">Endopeptidase Clp</fullName>
    </alternativeName>
</protein>
<evidence type="ECO:0000255" key="1">
    <source>
        <dbReference type="HAMAP-Rule" id="MF_00444"/>
    </source>
</evidence>
<feature type="chain" id="PRO_0000226443" description="ATP-dependent Clp protease proteolytic subunit">
    <location>
        <begin position="1"/>
        <end position="209"/>
    </location>
</feature>
<feature type="active site" description="Nucleophile" evidence="1">
    <location>
        <position position="111"/>
    </location>
</feature>
<feature type="active site" evidence="1">
    <location>
        <position position="136"/>
    </location>
</feature>
<name>CLPP_DECAR</name>
<reference key="1">
    <citation type="journal article" date="2009" name="BMC Genomics">
        <title>Metabolic analysis of the soil microbe Dechloromonas aromatica str. RCB: indications of a surprisingly complex life-style and cryptic anaerobic pathways for aromatic degradation.</title>
        <authorList>
            <person name="Salinero K.K."/>
            <person name="Keller K."/>
            <person name="Feil W.S."/>
            <person name="Feil H."/>
            <person name="Trong S."/>
            <person name="Di Bartolo G."/>
            <person name="Lapidus A."/>
        </authorList>
    </citation>
    <scope>NUCLEOTIDE SEQUENCE [LARGE SCALE GENOMIC DNA]</scope>
    <source>
        <strain>RCB</strain>
    </source>
</reference>
<comment type="function">
    <text evidence="1">Cleaves peptides in various proteins in a process that requires ATP hydrolysis. Has a chymotrypsin-like activity. Plays a major role in the degradation of misfolded proteins.</text>
</comment>
<comment type="catalytic activity">
    <reaction evidence="1">
        <text>Hydrolysis of proteins to small peptides in the presence of ATP and magnesium. alpha-casein is the usual test substrate. In the absence of ATP, only oligopeptides shorter than five residues are hydrolyzed (such as succinyl-Leu-Tyr-|-NHMec, and Leu-Tyr-Leu-|-Tyr-Trp, in which cleavage of the -Tyr-|-Leu- and -Tyr-|-Trp bonds also occurs).</text>
        <dbReference type="EC" id="3.4.21.92"/>
    </reaction>
</comment>
<comment type="subunit">
    <text evidence="1">Fourteen ClpP subunits assemble into 2 heptameric rings which stack back to back to give a disk-like structure with a central cavity, resembling the structure of eukaryotic proteasomes.</text>
</comment>
<comment type="subcellular location">
    <subcellularLocation>
        <location evidence="1">Cytoplasm</location>
    </subcellularLocation>
</comment>
<comment type="similarity">
    <text evidence="1">Belongs to the peptidase S14 family.</text>
</comment>